<protein>
    <recommendedName>
        <fullName evidence="1">NAD(P)H-quinone oxidoreductase subunit J, chloroplastic</fullName>
        <ecNumber evidence="1">7.1.1.-</ecNumber>
    </recommendedName>
    <alternativeName>
        <fullName>NAD(P)H dehydrogenase subunit J</fullName>
    </alternativeName>
    <alternativeName>
        <fullName evidence="1">NADH-plastoquinone oxidoreductase subunit J</fullName>
    </alternativeName>
</protein>
<proteinExistence type="evidence at protein level"/>
<accession>Q7GT16</accession>
<accession>A1E9J4</accession>
<dbReference type="EC" id="7.1.1.-" evidence="1"/>
<dbReference type="EMBL" id="AY243565">
    <property type="protein sequence ID" value="AAO72307.1"/>
    <property type="molecule type" value="Genomic_DNA"/>
</dbReference>
<dbReference type="EMBL" id="EF115541">
    <property type="protein sequence ID" value="ABK79416.1"/>
    <property type="molecule type" value="Genomic_DNA"/>
</dbReference>
<dbReference type="RefSeq" id="YP_874656.1">
    <property type="nucleotide sequence ID" value="NC_008590.1"/>
</dbReference>
<dbReference type="PDB" id="7EU3">
    <property type="method" value="EM"/>
    <property type="resolution" value="3.70 A"/>
    <property type="chains" value="J=1-159"/>
</dbReference>
<dbReference type="PDB" id="7F9O">
    <property type="method" value="EM"/>
    <property type="resolution" value="4.50 A"/>
    <property type="chains" value="U=1-159"/>
</dbReference>
<dbReference type="PDBsum" id="7EU3"/>
<dbReference type="PDBsum" id="7F9O"/>
<dbReference type="EMDB" id="EMD-31307"/>
<dbReference type="EMDB" id="EMD-31498"/>
<dbReference type="SMR" id="Q7GT16"/>
<dbReference type="GeneID" id="4525140"/>
<dbReference type="GO" id="GO:0009535">
    <property type="term" value="C:chloroplast thylakoid membrane"/>
    <property type="evidence" value="ECO:0007669"/>
    <property type="project" value="UniProtKB-SubCell"/>
</dbReference>
<dbReference type="GO" id="GO:0008137">
    <property type="term" value="F:NADH dehydrogenase (ubiquinone) activity"/>
    <property type="evidence" value="ECO:0007669"/>
    <property type="project" value="InterPro"/>
</dbReference>
<dbReference type="GO" id="GO:0048038">
    <property type="term" value="F:quinone binding"/>
    <property type="evidence" value="ECO:0007669"/>
    <property type="project" value="UniProtKB-KW"/>
</dbReference>
<dbReference type="GO" id="GO:0019684">
    <property type="term" value="P:photosynthesis, light reaction"/>
    <property type="evidence" value="ECO:0007669"/>
    <property type="project" value="UniProtKB-UniRule"/>
</dbReference>
<dbReference type="Gene3D" id="3.30.460.80">
    <property type="entry name" value="NADH:ubiquinone oxidoreductase, 30kDa subunit"/>
    <property type="match status" value="1"/>
</dbReference>
<dbReference type="HAMAP" id="MF_01357">
    <property type="entry name" value="NDH1_NuoC"/>
    <property type="match status" value="1"/>
</dbReference>
<dbReference type="InterPro" id="IPR010218">
    <property type="entry name" value="NADH_DH_suC"/>
</dbReference>
<dbReference type="InterPro" id="IPR037232">
    <property type="entry name" value="NADH_quin_OxRdtase_su_C/D-like"/>
</dbReference>
<dbReference type="InterPro" id="IPR001268">
    <property type="entry name" value="NADH_UbQ_OxRdtase_30kDa_su"/>
</dbReference>
<dbReference type="InterPro" id="IPR020396">
    <property type="entry name" value="NADH_UbQ_OxRdtase_CS"/>
</dbReference>
<dbReference type="NCBIfam" id="NF009141">
    <property type="entry name" value="PRK12494.1"/>
    <property type="match status" value="1"/>
</dbReference>
<dbReference type="PANTHER" id="PTHR10884:SF14">
    <property type="entry name" value="NADH DEHYDROGENASE [UBIQUINONE] IRON-SULFUR PROTEIN 3, MITOCHONDRIAL"/>
    <property type="match status" value="1"/>
</dbReference>
<dbReference type="PANTHER" id="PTHR10884">
    <property type="entry name" value="NADH DEHYDROGENASE UBIQUINONE IRON-SULFUR PROTEIN 3"/>
    <property type="match status" value="1"/>
</dbReference>
<dbReference type="Pfam" id="PF00329">
    <property type="entry name" value="Complex1_30kDa"/>
    <property type="match status" value="1"/>
</dbReference>
<dbReference type="SUPFAM" id="SSF143243">
    <property type="entry name" value="Nqo5-like"/>
    <property type="match status" value="1"/>
</dbReference>
<dbReference type="PROSITE" id="PS00542">
    <property type="entry name" value="COMPLEX1_30K"/>
    <property type="match status" value="1"/>
</dbReference>
<keyword id="KW-0002">3D-structure</keyword>
<keyword id="KW-0150">Chloroplast</keyword>
<keyword id="KW-0472">Membrane</keyword>
<keyword id="KW-0520">NAD</keyword>
<keyword id="KW-0521">NADP</keyword>
<keyword id="KW-0934">Plastid</keyword>
<keyword id="KW-0618">Plastoquinone</keyword>
<keyword id="KW-0874">Quinone</keyword>
<keyword id="KW-0793">Thylakoid</keyword>
<keyword id="KW-1278">Translocase</keyword>
<keyword id="KW-0813">Transport</keyword>
<geneLocation type="chloroplast"/>
<organism>
    <name type="scientific">Hordeum vulgare</name>
    <name type="common">Barley</name>
    <dbReference type="NCBI Taxonomy" id="4513"/>
    <lineage>
        <taxon>Eukaryota</taxon>
        <taxon>Viridiplantae</taxon>
        <taxon>Streptophyta</taxon>
        <taxon>Embryophyta</taxon>
        <taxon>Tracheophyta</taxon>
        <taxon>Spermatophyta</taxon>
        <taxon>Magnoliopsida</taxon>
        <taxon>Liliopsida</taxon>
        <taxon>Poales</taxon>
        <taxon>Poaceae</taxon>
        <taxon>BOP clade</taxon>
        <taxon>Pooideae</taxon>
        <taxon>Triticodae</taxon>
        <taxon>Triticeae</taxon>
        <taxon>Hordeinae</taxon>
        <taxon>Hordeum</taxon>
    </lineage>
</organism>
<name>NDHJ_HORVU</name>
<gene>
    <name evidence="1" type="primary">ndhJ</name>
</gene>
<comment type="function">
    <text evidence="1">NDH shuttles electrons from NAD(P)H:plastoquinone, via FMN and iron-sulfur (Fe-S) centers, to quinones in the photosynthetic chain and possibly in a chloroplast respiratory chain. The immediate electron acceptor for the enzyme in this species is believed to be plastoquinone. Couples the redox reaction to proton translocation, and thus conserves the redox energy in a proton gradient.</text>
</comment>
<comment type="catalytic activity">
    <reaction evidence="1">
        <text>a plastoquinone + NADH + (n+1) H(+)(in) = a plastoquinol + NAD(+) + n H(+)(out)</text>
        <dbReference type="Rhea" id="RHEA:42608"/>
        <dbReference type="Rhea" id="RHEA-COMP:9561"/>
        <dbReference type="Rhea" id="RHEA-COMP:9562"/>
        <dbReference type="ChEBI" id="CHEBI:15378"/>
        <dbReference type="ChEBI" id="CHEBI:17757"/>
        <dbReference type="ChEBI" id="CHEBI:57540"/>
        <dbReference type="ChEBI" id="CHEBI:57945"/>
        <dbReference type="ChEBI" id="CHEBI:62192"/>
    </reaction>
</comment>
<comment type="catalytic activity">
    <reaction evidence="1">
        <text>a plastoquinone + NADPH + (n+1) H(+)(in) = a plastoquinol + NADP(+) + n H(+)(out)</text>
        <dbReference type="Rhea" id="RHEA:42612"/>
        <dbReference type="Rhea" id="RHEA-COMP:9561"/>
        <dbReference type="Rhea" id="RHEA-COMP:9562"/>
        <dbReference type="ChEBI" id="CHEBI:15378"/>
        <dbReference type="ChEBI" id="CHEBI:17757"/>
        <dbReference type="ChEBI" id="CHEBI:57783"/>
        <dbReference type="ChEBI" id="CHEBI:58349"/>
        <dbReference type="ChEBI" id="CHEBI:62192"/>
    </reaction>
</comment>
<comment type="subunit">
    <text evidence="1">NDH is composed of at least 16 different subunits, 5 of which are encoded in the nucleus.</text>
</comment>
<comment type="subcellular location">
    <subcellularLocation>
        <location evidence="1">Plastid</location>
        <location evidence="1">Chloroplast thylakoid membrane</location>
        <topology evidence="1">Peripheral membrane protein</topology>
        <orientation evidence="1">Stromal side</orientation>
    </subcellularLocation>
</comment>
<comment type="similarity">
    <text evidence="1">Belongs to the complex I 30 kDa subunit family.</text>
</comment>
<feature type="chain" id="PRO_0000358271" description="NAD(P)H-quinone oxidoreductase subunit J, chloroplastic">
    <location>
        <begin position="1"/>
        <end position="159"/>
    </location>
</feature>
<evidence type="ECO:0000255" key="1">
    <source>
        <dbReference type="HAMAP-Rule" id="MF_01357"/>
    </source>
</evidence>
<reference key="1">
    <citation type="submission" date="2003-02" db="EMBL/GenBank/DDBJ databases">
        <title>Barley chloroplast ndhC,K,J operon.</title>
        <authorList>
            <person name="Serrot P.H."/>
            <person name="Sabater B."/>
            <person name="Martin M."/>
        </authorList>
    </citation>
    <scope>NUCLEOTIDE SEQUENCE [GENOMIC DNA]</scope>
</reference>
<reference key="2">
    <citation type="journal article" date="2007" name="Theor. Appl. Genet.">
        <title>Complete chloroplast genome sequences of Hordeum vulgare, Sorghum bicolor and Agrostis stolonifera, and comparative analyses with other grass genomes.</title>
        <authorList>
            <person name="Saski C."/>
            <person name="Lee S.-B."/>
            <person name="Fjellheim S."/>
            <person name="Guda C."/>
            <person name="Jansen R.K."/>
            <person name="Luo H."/>
            <person name="Tomkins J."/>
            <person name="Rognli O.A."/>
            <person name="Daniell H."/>
            <person name="Clarke J.L."/>
        </authorList>
    </citation>
    <scope>NUCLEOTIDE SEQUENCE [LARGE SCALE GENOMIC DNA]</scope>
    <source>
        <strain>cv. Morex</strain>
    </source>
</reference>
<sequence>MQQGWLSNWLVKHEVVHRSLGFDHRGIETLQIKAGDWDSIAVILYVYGYNYLRSQCAYDVAPGGSLASVYHLTRIQYGIDNPEEVCIKVFAQKDNPRIPSVFWIWRSADFQERESYDMVGISYDNHPRLKRILMPESWIGWPLRKDYITPNFYEIQDAH</sequence>